<comment type="function">
    <text evidence="3">Not required for the biogenesis and accumulation of native cytochrome b6 in the thylakoid membrane. Not functionally involved in the pathway for covalent binding of the c-type heme to cytochrome b6.</text>
</comment>
<comment type="subcellular location">
    <subcellularLocation>
        <location evidence="1">Plastid</location>
        <location evidence="1">Chloroplast thylakoid membrane</location>
        <topology evidence="2">Multi-pass membrane protein</topology>
    </subcellularLocation>
</comment>
<comment type="disruption phenotype">
    <text evidence="3">No visible phenotype under normal growth conditions.</text>
</comment>
<comment type="similarity">
    <text evidence="6">Belongs to the YggT family.</text>
</comment>
<dbReference type="EMBL" id="AL035524">
    <property type="protein sequence ID" value="CAB36768.1"/>
    <property type="molecule type" value="Genomic_DNA"/>
</dbReference>
<dbReference type="EMBL" id="AL161572">
    <property type="protein sequence ID" value="CAB79601.1"/>
    <property type="molecule type" value="Genomic_DNA"/>
</dbReference>
<dbReference type="EMBL" id="CP002687">
    <property type="protein sequence ID" value="AEE85417.1"/>
    <property type="molecule type" value="Genomic_DNA"/>
</dbReference>
<dbReference type="EMBL" id="AK226522">
    <property type="protein sequence ID" value="BAE98662.1"/>
    <property type="molecule type" value="mRNA"/>
</dbReference>
<dbReference type="EMBL" id="AY087165">
    <property type="protein sequence ID" value="AAM64721.1"/>
    <property type="molecule type" value="mRNA"/>
</dbReference>
<dbReference type="PIR" id="T02900">
    <property type="entry name" value="T02900"/>
</dbReference>
<dbReference type="RefSeq" id="NP_194528.1">
    <property type="nucleotide sequence ID" value="NM_118937.2"/>
</dbReference>
<dbReference type="SMR" id="Q9SUE0"/>
<dbReference type="FunCoup" id="Q9SUE0">
    <property type="interactions" value="603"/>
</dbReference>
<dbReference type="STRING" id="3702.Q9SUE0"/>
<dbReference type="PaxDb" id="3702-AT4G27990.1"/>
<dbReference type="ProteomicsDB" id="242929"/>
<dbReference type="EnsemblPlants" id="AT4G27990.1">
    <property type="protein sequence ID" value="AT4G27990.1"/>
    <property type="gene ID" value="AT4G27990"/>
</dbReference>
<dbReference type="GeneID" id="828912"/>
<dbReference type="Gramene" id="AT4G27990.1">
    <property type="protein sequence ID" value="AT4G27990.1"/>
    <property type="gene ID" value="AT4G27990"/>
</dbReference>
<dbReference type="KEGG" id="ath:AT4G27990"/>
<dbReference type="Araport" id="AT4G27990"/>
<dbReference type="TAIR" id="AT4G27990">
    <property type="gene designation" value="YLMG1-2"/>
</dbReference>
<dbReference type="eggNOG" id="ENOG502S1YI">
    <property type="taxonomic scope" value="Eukaryota"/>
</dbReference>
<dbReference type="HOGENOM" id="CLU_092220_1_0_1"/>
<dbReference type="InParanoid" id="Q9SUE0"/>
<dbReference type="OMA" id="HRFPPIC"/>
<dbReference type="OrthoDB" id="2066at2759"/>
<dbReference type="PhylomeDB" id="Q9SUE0"/>
<dbReference type="PRO" id="PR:Q9SUE0"/>
<dbReference type="Proteomes" id="UP000006548">
    <property type="component" value="Chromosome 4"/>
</dbReference>
<dbReference type="ExpressionAtlas" id="Q9SUE0">
    <property type="expression patterns" value="baseline and differential"/>
</dbReference>
<dbReference type="GO" id="GO:0009507">
    <property type="term" value="C:chloroplast"/>
    <property type="evidence" value="ECO:0007005"/>
    <property type="project" value="TAIR"/>
</dbReference>
<dbReference type="GO" id="GO:0009941">
    <property type="term" value="C:chloroplast envelope"/>
    <property type="evidence" value="ECO:0007005"/>
    <property type="project" value="TAIR"/>
</dbReference>
<dbReference type="GO" id="GO:0009535">
    <property type="term" value="C:chloroplast thylakoid membrane"/>
    <property type="evidence" value="ECO:0007669"/>
    <property type="project" value="UniProtKB-SubCell"/>
</dbReference>
<dbReference type="GO" id="GO:0005886">
    <property type="term" value="C:plasma membrane"/>
    <property type="evidence" value="ECO:0007005"/>
    <property type="project" value="TAIR"/>
</dbReference>
<dbReference type="InterPro" id="IPR003425">
    <property type="entry name" value="CCB3/YggT"/>
</dbReference>
<dbReference type="PANTHER" id="PTHR33219:SF15">
    <property type="entry name" value="YLMG HOMOLOG PROTEIN 1-2, CHLOROPLASTIC"/>
    <property type="match status" value="1"/>
</dbReference>
<dbReference type="PANTHER" id="PTHR33219">
    <property type="entry name" value="YLMG HOMOLOG PROTEIN 2, CHLOROPLASTIC"/>
    <property type="match status" value="1"/>
</dbReference>
<dbReference type="Pfam" id="PF02325">
    <property type="entry name" value="YGGT"/>
    <property type="match status" value="1"/>
</dbReference>
<reference key="1">
    <citation type="journal article" date="1999" name="Nature">
        <title>Sequence and analysis of chromosome 4 of the plant Arabidopsis thaliana.</title>
        <authorList>
            <person name="Mayer K.F.X."/>
            <person name="Schueller C."/>
            <person name="Wambutt R."/>
            <person name="Murphy G."/>
            <person name="Volckaert G."/>
            <person name="Pohl T."/>
            <person name="Duesterhoeft A."/>
            <person name="Stiekema W."/>
            <person name="Entian K.-D."/>
            <person name="Terryn N."/>
            <person name="Harris B."/>
            <person name="Ansorge W."/>
            <person name="Brandt P."/>
            <person name="Grivell L.A."/>
            <person name="Rieger M."/>
            <person name="Weichselgartner M."/>
            <person name="de Simone V."/>
            <person name="Obermaier B."/>
            <person name="Mache R."/>
            <person name="Mueller M."/>
            <person name="Kreis M."/>
            <person name="Delseny M."/>
            <person name="Puigdomenech P."/>
            <person name="Watson M."/>
            <person name="Schmidtheini T."/>
            <person name="Reichert B."/>
            <person name="Portetelle D."/>
            <person name="Perez-Alonso M."/>
            <person name="Boutry M."/>
            <person name="Bancroft I."/>
            <person name="Vos P."/>
            <person name="Hoheisel J."/>
            <person name="Zimmermann W."/>
            <person name="Wedler H."/>
            <person name="Ridley P."/>
            <person name="Langham S.-A."/>
            <person name="McCullagh B."/>
            <person name="Bilham L."/>
            <person name="Robben J."/>
            <person name="van der Schueren J."/>
            <person name="Grymonprez B."/>
            <person name="Chuang Y.-J."/>
            <person name="Vandenbussche F."/>
            <person name="Braeken M."/>
            <person name="Weltjens I."/>
            <person name="Voet M."/>
            <person name="Bastiaens I."/>
            <person name="Aert R."/>
            <person name="Defoor E."/>
            <person name="Weitzenegger T."/>
            <person name="Bothe G."/>
            <person name="Ramsperger U."/>
            <person name="Hilbert H."/>
            <person name="Braun M."/>
            <person name="Holzer E."/>
            <person name="Brandt A."/>
            <person name="Peters S."/>
            <person name="van Staveren M."/>
            <person name="Dirkse W."/>
            <person name="Mooijman P."/>
            <person name="Klein Lankhorst R."/>
            <person name="Rose M."/>
            <person name="Hauf J."/>
            <person name="Koetter P."/>
            <person name="Berneiser S."/>
            <person name="Hempel S."/>
            <person name="Feldpausch M."/>
            <person name="Lamberth S."/>
            <person name="Van den Daele H."/>
            <person name="De Keyser A."/>
            <person name="Buysshaert C."/>
            <person name="Gielen J."/>
            <person name="Villarroel R."/>
            <person name="De Clercq R."/>
            <person name="van Montagu M."/>
            <person name="Rogers J."/>
            <person name="Cronin A."/>
            <person name="Quail M.A."/>
            <person name="Bray-Allen S."/>
            <person name="Clark L."/>
            <person name="Doggett J."/>
            <person name="Hall S."/>
            <person name="Kay M."/>
            <person name="Lennard N."/>
            <person name="McLay K."/>
            <person name="Mayes R."/>
            <person name="Pettett A."/>
            <person name="Rajandream M.A."/>
            <person name="Lyne M."/>
            <person name="Benes V."/>
            <person name="Rechmann S."/>
            <person name="Borkova D."/>
            <person name="Bloecker H."/>
            <person name="Scharfe M."/>
            <person name="Grimm M."/>
            <person name="Loehnert T.-H."/>
            <person name="Dose S."/>
            <person name="de Haan M."/>
            <person name="Maarse A.C."/>
            <person name="Schaefer M."/>
            <person name="Mueller-Auer S."/>
            <person name="Gabel C."/>
            <person name="Fuchs M."/>
            <person name="Fartmann B."/>
            <person name="Granderath K."/>
            <person name="Dauner D."/>
            <person name="Herzl A."/>
            <person name="Neumann S."/>
            <person name="Argiriou A."/>
            <person name="Vitale D."/>
            <person name="Liguori R."/>
            <person name="Piravandi E."/>
            <person name="Massenet O."/>
            <person name="Quigley F."/>
            <person name="Clabauld G."/>
            <person name="Muendlein A."/>
            <person name="Felber R."/>
            <person name="Schnabl S."/>
            <person name="Hiller R."/>
            <person name="Schmidt W."/>
            <person name="Lecharny A."/>
            <person name="Aubourg S."/>
            <person name="Chefdor F."/>
            <person name="Cooke R."/>
            <person name="Berger C."/>
            <person name="Monfort A."/>
            <person name="Casacuberta E."/>
            <person name="Gibbons T."/>
            <person name="Weber N."/>
            <person name="Vandenbol M."/>
            <person name="Bargues M."/>
            <person name="Terol J."/>
            <person name="Torres A."/>
            <person name="Perez-Perez A."/>
            <person name="Purnelle B."/>
            <person name="Bent E."/>
            <person name="Johnson S."/>
            <person name="Tacon D."/>
            <person name="Jesse T."/>
            <person name="Heijnen L."/>
            <person name="Schwarz S."/>
            <person name="Scholler P."/>
            <person name="Heber S."/>
            <person name="Francs P."/>
            <person name="Bielke C."/>
            <person name="Frishman D."/>
            <person name="Haase D."/>
            <person name="Lemcke K."/>
            <person name="Mewes H.-W."/>
            <person name="Stocker S."/>
            <person name="Zaccaria P."/>
            <person name="Bevan M."/>
            <person name="Wilson R.K."/>
            <person name="de la Bastide M."/>
            <person name="Habermann K."/>
            <person name="Parnell L."/>
            <person name="Dedhia N."/>
            <person name="Gnoj L."/>
            <person name="Schutz K."/>
            <person name="Huang E."/>
            <person name="Spiegel L."/>
            <person name="Sekhon M."/>
            <person name="Murray J."/>
            <person name="Sheet P."/>
            <person name="Cordes M."/>
            <person name="Abu-Threideh J."/>
            <person name="Stoneking T."/>
            <person name="Kalicki J."/>
            <person name="Graves T."/>
            <person name="Harmon G."/>
            <person name="Edwards J."/>
            <person name="Latreille P."/>
            <person name="Courtney L."/>
            <person name="Cloud J."/>
            <person name="Abbott A."/>
            <person name="Scott K."/>
            <person name="Johnson D."/>
            <person name="Minx P."/>
            <person name="Bentley D."/>
            <person name="Fulton B."/>
            <person name="Miller N."/>
            <person name="Greco T."/>
            <person name="Kemp K."/>
            <person name="Kramer J."/>
            <person name="Fulton L."/>
            <person name="Mardis E."/>
            <person name="Dante M."/>
            <person name="Pepin K."/>
            <person name="Hillier L.W."/>
            <person name="Nelson J."/>
            <person name="Spieth J."/>
            <person name="Ryan E."/>
            <person name="Andrews S."/>
            <person name="Geisel C."/>
            <person name="Layman D."/>
            <person name="Du H."/>
            <person name="Ali J."/>
            <person name="Berghoff A."/>
            <person name="Jones K."/>
            <person name="Drone K."/>
            <person name="Cotton M."/>
            <person name="Joshu C."/>
            <person name="Antonoiu B."/>
            <person name="Zidanic M."/>
            <person name="Strong C."/>
            <person name="Sun H."/>
            <person name="Lamar B."/>
            <person name="Yordan C."/>
            <person name="Ma P."/>
            <person name="Zhong J."/>
            <person name="Preston R."/>
            <person name="Vil D."/>
            <person name="Shekher M."/>
            <person name="Matero A."/>
            <person name="Shah R."/>
            <person name="Swaby I.K."/>
            <person name="O'Shaughnessy A."/>
            <person name="Rodriguez M."/>
            <person name="Hoffman J."/>
            <person name="Till S."/>
            <person name="Granat S."/>
            <person name="Shohdy N."/>
            <person name="Hasegawa A."/>
            <person name="Hameed A."/>
            <person name="Lodhi M."/>
            <person name="Johnson A."/>
            <person name="Chen E."/>
            <person name="Marra M.A."/>
            <person name="Martienssen R."/>
            <person name="McCombie W.R."/>
        </authorList>
    </citation>
    <scope>NUCLEOTIDE SEQUENCE [LARGE SCALE GENOMIC DNA]</scope>
    <source>
        <strain>cv. Columbia</strain>
    </source>
</reference>
<reference key="2">
    <citation type="journal article" date="2017" name="Plant J.">
        <title>Araport11: a complete reannotation of the Arabidopsis thaliana reference genome.</title>
        <authorList>
            <person name="Cheng C.Y."/>
            <person name="Krishnakumar V."/>
            <person name="Chan A.P."/>
            <person name="Thibaud-Nissen F."/>
            <person name="Schobel S."/>
            <person name="Town C.D."/>
        </authorList>
    </citation>
    <scope>GENOME REANNOTATION</scope>
    <source>
        <strain>cv. Columbia</strain>
    </source>
</reference>
<reference key="3">
    <citation type="submission" date="2006-07" db="EMBL/GenBank/DDBJ databases">
        <title>Large-scale analysis of RIKEN Arabidopsis full-length (RAFL) cDNAs.</title>
        <authorList>
            <person name="Totoki Y."/>
            <person name="Seki M."/>
            <person name="Ishida J."/>
            <person name="Nakajima M."/>
            <person name="Enju A."/>
            <person name="Kamiya A."/>
            <person name="Narusaka M."/>
            <person name="Shin-i T."/>
            <person name="Nakagawa M."/>
            <person name="Sakamoto N."/>
            <person name="Oishi K."/>
            <person name="Kohara Y."/>
            <person name="Kobayashi M."/>
            <person name="Toyoda A."/>
            <person name="Sakaki Y."/>
            <person name="Sakurai T."/>
            <person name="Iida K."/>
            <person name="Akiyama K."/>
            <person name="Satou M."/>
            <person name="Toyoda T."/>
            <person name="Konagaya A."/>
            <person name="Carninci P."/>
            <person name="Kawai J."/>
            <person name="Hayashizaki Y."/>
            <person name="Shinozaki K."/>
        </authorList>
    </citation>
    <scope>NUCLEOTIDE SEQUENCE [LARGE SCALE MRNA]</scope>
    <source>
        <strain>cv. Columbia</strain>
    </source>
</reference>
<reference key="4">
    <citation type="submission" date="2002-03" db="EMBL/GenBank/DDBJ databases">
        <title>Full-length cDNA from Arabidopsis thaliana.</title>
        <authorList>
            <person name="Brover V.V."/>
            <person name="Troukhan M.E."/>
            <person name="Alexandrov N.A."/>
            <person name="Lu Y.-P."/>
            <person name="Flavell R.B."/>
            <person name="Feldmann K.A."/>
        </authorList>
    </citation>
    <scope>NUCLEOTIDE SEQUENCE [LARGE SCALE MRNA]</scope>
</reference>
<reference key="5">
    <citation type="journal article" date="2008" name="J. Biol. Chem.">
        <title>A novel pathway of cytochrome c biogenesis is involved in the assembly of the cytochrome b6f complex in arabidopsis chloroplasts.</title>
        <authorList>
            <person name="Lezhneva L."/>
            <person name="Kuras R."/>
            <person name="Ephritikhine G."/>
            <person name="de Vitry C."/>
        </authorList>
    </citation>
    <scope>FUNCTION</scope>
    <scope>DISRUPTION PHENOTYPE</scope>
</reference>
<reference key="6">
    <citation type="journal article" date="2010" name="BMC Plant Biol.">
        <title>The YlmG protein has a conserved function related to the distribution of nucleoids in chloroplasts and cyanobacteria.</title>
        <authorList>
            <person name="Kabeya Y."/>
            <person name="Nakanishi H."/>
            <person name="Suzuki K."/>
            <person name="Ichikawa T."/>
            <person name="Kondou Y."/>
            <person name="Matsui M."/>
            <person name="Miyagishima S.Y."/>
        </authorList>
    </citation>
    <scope>GENE FAMILY</scope>
</reference>
<organism>
    <name type="scientific">Arabidopsis thaliana</name>
    <name type="common">Mouse-ear cress</name>
    <dbReference type="NCBI Taxonomy" id="3702"/>
    <lineage>
        <taxon>Eukaryota</taxon>
        <taxon>Viridiplantae</taxon>
        <taxon>Streptophyta</taxon>
        <taxon>Embryophyta</taxon>
        <taxon>Tracheophyta</taxon>
        <taxon>Spermatophyta</taxon>
        <taxon>Magnoliopsida</taxon>
        <taxon>eudicotyledons</taxon>
        <taxon>Gunneridae</taxon>
        <taxon>Pentapetalae</taxon>
        <taxon>rosids</taxon>
        <taxon>malvids</taxon>
        <taxon>Brassicales</taxon>
        <taxon>Brassicaceae</taxon>
        <taxon>Camelineae</taxon>
        <taxon>Arabidopsis</taxon>
    </lineage>
</organism>
<keyword id="KW-0150">Chloroplast</keyword>
<keyword id="KW-0472">Membrane</keyword>
<keyword id="KW-0934">Plastid</keyword>
<keyword id="KW-1185">Reference proteome</keyword>
<keyword id="KW-0793">Thylakoid</keyword>
<keyword id="KW-0809">Transit peptide</keyword>
<keyword id="KW-0812">Transmembrane</keyword>
<keyword id="KW-1133">Transmembrane helix</keyword>
<feature type="transit peptide" description="Chloroplast" evidence="2">
    <location>
        <begin position="1"/>
        <end position="83"/>
    </location>
</feature>
<feature type="chain" id="PRO_0000433267" description="YlmG homolog protein 1-2, chloroplastic" evidence="2">
    <location>
        <begin position="84"/>
        <end position="218"/>
    </location>
</feature>
<feature type="transmembrane region" description="Helical" evidence="2">
    <location>
        <begin position="133"/>
        <end position="153"/>
    </location>
</feature>
<feature type="transmembrane region" description="Helical" evidence="2">
    <location>
        <begin position="187"/>
        <end position="207"/>
    </location>
</feature>
<feature type="sequence conflict" description="In Ref. 4; AAM64721." evidence="6" ref="4">
    <original>T</original>
    <variation>N</variation>
    <location>
        <position position="79"/>
    </location>
</feature>
<feature type="sequence conflict" description="In Ref. 4; AAM64721." evidence="6" ref="4">
    <original>R</original>
    <variation>G</variation>
    <location>
        <position position="167"/>
    </location>
</feature>
<accession>Q9SUE0</accession>
<accession>Q8LBK0</accession>
<sequence>MASFTTNSLALRASILANPRLPPPIIRPRLSLPRKLSFNLSLHNARTIVSSAVTSSSPVLSSKPPSQFPFSDSTRSITTLVLLAGVVIKSLIQKLSVAIVNLSPQIQASFRTASPLFFASLRDRPAGYLNTPLTVVAAGLSKWLDIYSGVLMVRVLLSWFPNIPWDRQPLSAIRDLCDPYLNLFRNIIPPVFDTLDVSPLLAFAVLGTLGSILNNSRG</sequence>
<proteinExistence type="evidence at transcript level"/>
<gene>
    <name evidence="5" type="primary">YLMG1-2</name>
    <name evidence="4" type="synonym">YGGT-B</name>
    <name evidence="7" type="ordered locus">At4g27990</name>
    <name evidence="8" type="ORF">T13J8.100</name>
</gene>
<name>YMG12_ARATH</name>
<protein>
    <recommendedName>
        <fullName evidence="6">YlmG homolog protein 1-2, chloroplastic</fullName>
        <shortName evidence="5">AtYLMG1-2</shortName>
    </recommendedName>
    <alternativeName>
        <fullName evidence="6">YGGT family protein YLMG1-2</fullName>
    </alternativeName>
</protein>
<evidence type="ECO:0000250" key="1">
    <source>
        <dbReference type="UniProtKB" id="Q9SRS3"/>
    </source>
</evidence>
<evidence type="ECO:0000255" key="2"/>
<evidence type="ECO:0000269" key="3">
    <source>
    </source>
</evidence>
<evidence type="ECO:0000303" key="4">
    <source>
    </source>
</evidence>
<evidence type="ECO:0000303" key="5">
    <source>
    </source>
</evidence>
<evidence type="ECO:0000305" key="6"/>
<evidence type="ECO:0000312" key="7">
    <source>
        <dbReference type="Araport" id="AT4G27990"/>
    </source>
</evidence>
<evidence type="ECO:0000312" key="8">
    <source>
        <dbReference type="EMBL" id="CAB36768.1"/>
    </source>
</evidence>